<protein>
    <recommendedName>
        <fullName evidence="1">Nuclear distribution protein PAC1</fullName>
    </recommendedName>
    <alternativeName>
        <fullName evidence="1">Lissencephaly-1 homolog</fullName>
        <shortName evidence="1">LIS-1</shortName>
    </alternativeName>
    <alternativeName>
        <fullName evidence="1">nudF homolog</fullName>
    </alternativeName>
</protein>
<comment type="function">
    <text evidence="1">Positively regulates the activity of the minus-end directed microtubule motor protein dynein. May enhance dynein-mediated microtubule sliding by targeting dynein to the microtubule plus end. Required for nuclear migration during vegetative growth as well as development. Required for retrograde early endosome (EE) transport from the hyphal tip. Required for localization of dynein to the mitotic spindle poles. Recruits additional proteins to the dynein complex at SPBs.</text>
</comment>
<comment type="subunit">
    <text evidence="1">Self-associates. Interacts with NDL1 and dynein.</text>
</comment>
<comment type="subcellular location">
    <subcellularLocation>
        <location evidence="1">Cytoplasm</location>
        <location evidence="1">Cytoskeleton</location>
    </subcellularLocation>
    <subcellularLocation>
        <location evidence="1">Cytoplasm</location>
        <location evidence="1">Cytoskeleton</location>
        <location evidence="1">Spindle pole</location>
    </subcellularLocation>
    <text evidence="1">Localizes to the plus ends of microtubules at the hyphal tip and the mitotic spindle poles.</text>
</comment>
<comment type="domain">
    <text evidence="1">Dimerization mediated by the LisH domain may be required to activate dynein.</text>
</comment>
<comment type="similarity">
    <text evidence="1">Belongs to the WD repeat LIS1/nudF family.</text>
</comment>
<comment type="sequence caution" evidence="2">
    <conflict type="erroneous gene model prediction">
        <sequence resource="EMBL-CDS" id="EAU88711"/>
    </conflict>
</comment>
<sequence>MSLLSDRQKDDLHKAMLDYLYANNHTAAFNALKESAGITYTPDPTARYTGLLEKKWTSVIRLQKKIMELENRNAALQEELSMSPARRAASQADWLPRAPAAHVLTGHRAPLTSIAFHPQYSILASASEDTTVKIWDWETGEFERTLKGHTKPVNDLDFDHKGHLLVTCSSDLFIKIWDSQNEWKNTKTFVGHDHAVSAVRFMPGDQLIVSASRDRTIRVFDVASTHQVRTLSGHSEWVRCVIPSADGTMLASGSKDQTVRLWDPLTGEPKSELRGHENDVEAVAFAPISAYAAIRELAGIPNDRTKRHGLFLASGARDKTVKLWDTQTGQMIRNLAGHDNWVRALAFHPSGKYLLSSSDDKTVRVWELSTGRCLRIVEAHSHFVAALAWGRQAAGKSGSEKKVNGVDSVDAEPEKVVNVVATGSVDETIKIWLP</sequence>
<feature type="chain" id="PRO_0000405079" description="Nuclear distribution protein PAC1">
    <location>
        <begin position="1"/>
        <end position="434"/>
    </location>
</feature>
<feature type="domain" description="LisH" evidence="1">
    <location>
        <begin position="8"/>
        <end position="40"/>
    </location>
</feature>
<feature type="repeat" description="WD 1">
    <location>
        <begin position="106"/>
        <end position="147"/>
    </location>
</feature>
<feature type="repeat" description="WD 2">
    <location>
        <begin position="149"/>
        <end position="187"/>
    </location>
</feature>
<feature type="repeat" description="WD 3">
    <location>
        <begin position="191"/>
        <end position="230"/>
    </location>
</feature>
<feature type="repeat" description="WD 4">
    <location>
        <begin position="233"/>
        <end position="272"/>
    </location>
</feature>
<feature type="repeat" description="WD 5">
    <location>
        <begin position="275"/>
        <end position="334"/>
    </location>
</feature>
<feature type="repeat" description="WD 6">
    <location>
        <begin position="337"/>
        <end position="378"/>
    </location>
</feature>
<feature type="repeat" description="WD 7">
    <location>
        <begin position="401"/>
        <end position="434"/>
    </location>
</feature>
<feature type="coiled-coil region" evidence="1">
    <location>
        <begin position="57"/>
        <end position="83"/>
    </location>
</feature>
<proteinExistence type="inferred from homology"/>
<dbReference type="EMBL" id="AACS02000002">
    <property type="protein sequence ID" value="EAU88711.2"/>
    <property type="status" value="ALT_SEQ"/>
    <property type="molecule type" value="Genomic_DNA"/>
</dbReference>
<dbReference type="RefSeq" id="XP_001833022.2">
    <property type="nucleotide sequence ID" value="XM_001832970.2"/>
</dbReference>
<dbReference type="SMR" id="A8NEG8"/>
<dbReference type="STRING" id="240176.A8NEG8"/>
<dbReference type="GeneID" id="6009513"/>
<dbReference type="KEGG" id="cci:CC1G_01084"/>
<dbReference type="eggNOG" id="KOG0295">
    <property type="taxonomic scope" value="Eukaryota"/>
</dbReference>
<dbReference type="HOGENOM" id="CLU_000288_57_15_1"/>
<dbReference type="InParanoid" id="A8NEG8"/>
<dbReference type="OrthoDB" id="10264588at2759"/>
<dbReference type="Proteomes" id="UP000001861">
    <property type="component" value="Unassembled WGS sequence"/>
</dbReference>
<dbReference type="GO" id="GO:0005737">
    <property type="term" value="C:cytoplasm"/>
    <property type="evidence" value="ECO:0007669"/>
    <property type="project" value="UniProtKB-UniRule"/>
</dbReference>
<dbReference type="GO" id="GO:0005874">
    <property type="term" value="C:microtubule"/>
    <property type="evidence" value="ECO:0007669"/>
    <property type="project" value="UniProtKB-KW"/>
</dbReference>
<dbReference type="GO" id="GO:0005875">
    <property type="term" value="C:microtubule associated complex"/>
    <property type="evidence" value="ECO:0007669"/>
    <property type="project" value="UniProtKB-UniRule"/>
</dbReference>
<dbReference type="GO" id="GO:0000922">
    <property type="term" value="C:spindle pole"/>
    <property type="evidence" value="ECO:0007669"/>
    <property type="project" value="UniProtKB-SubCell"/>
</dbReference>
<dbReference type="GO" id="GO:0070840">
    <property type="term" value="F:dynein complex binding"/>
    <property type="evidence" value="ECO:0007669"/>
    <property type="project" value="UniProtKB-UniRule"/>
</dbReference>
<dbReference type="GO" id="GO:0051301">
    <property type="term" value="P:cell division"/>
    <property type="evidence" value="ECO:0007669"/>
    <property type="project" value="UniProtKB-KW"/>
</dbReference>
<dbReference type="GO" id="GO:0000132">
    <property type="term" value="P:establishment of mitotic spindle orientation"/>
    <property type="evidence" value="ECO:0007669"/>
    <property type="project" value="UniProtKB-UniRule"/>
</dbReference>
<dbReference type="GO" id="GO:0051012">
    <property type="term" value="P:microtubule sliding"/>
    <property type="evidence" value="ECO:0007669"/>
    <property type="project" value="UniProtKB-UniRule"/>
</dbReference>
<dbReference type="CDD" id="cd00200">
    <property type="entry name" value="WD40"/>
    <property type="match status" value="1"/>
</dbReference>
<dbReference type="FunFam" id="2.130.10.10:FF:000342">
    <property type="entry name" value="Nuclear distribution protein PAC1"/>
    <property type="match status" value="1"/>
</dbReference>
<dbReference type="FunFam" id="1.20.960.30:FF:000002">
    <property type="entry name" value="Platelet-activating factor acetylhydrolase ib"/>
    <property type="match status" value="1"/>
</dbReference>
<dbReference type="Gene3D" id="1.20.960.30">
    <property type="match status" value="1"/>
</dbReference>
<dbReference type="Gene3D" id="2.130.10.10">
    <property type="entry name" value="YVTN repeat-like/Quinoprotein amine dehydrogenase"/>
    <property type="match status" value="1"/>
</dbReference>
<dbReference type="HAMAP" id="MF_03141">
    <property type="entry name" value="lis1"/>
    <property type="match status" value="1"/>
</dbReference>
<dbReference type="InterPro" id="IPR017252">
    <property type="entry name" value="Dynein_regulator_LIS1"/>
</dbReference>
<dbReference type="InterPro" id="IPR020472">
    <property type="entry name" value="G-protein_beta_WD-40_rep"/>
</dbReference>
<dbReference type="InterPro" id="IPR037190">
    <property type="entry name" value="LIS1_N"/>
</dbReference>
<dbReference type="InterPro" id="IPR006594">
    <property type="entry name" value="LisH"/>
</dbReference>
<dbReference type="InterPro" id="IPR056795">
    <property type="entry name" value="PAC1-like_LisH-like_dom"/>
</dbReference>
<dbReference type="InterPro" id="IPR015943">
    <property type="entry name" value="WD40/YVTN_repeat-like_dom_sf"/>
</dbReference>
<dbReference type="InterPro" id="IPR019775">
    <property type="entry name" value="WD40_repeat_CS"/>
</dbReference>
<dbReference type="InterPro" id="IPR036322">
    <property type="entry name" value="WD40_repeat_dom_sf"/>
</dbReference>
<dbReference type="InterPro" id="IPR001680">
    <property type="entry name" value="WD40_rpt"/>
</dbReference>
<dbReference type="PANTHER" id="PTHR19879">
    <property type="entry name" value="TRANSCRIPTION INITIATION FACTOR TFIID"/>
    <property type="match status" value="1"/>
</dbReference>
<dbReference type="PANTHER" id="PTHR19879:SF9">
    <property type="entry name" value="TRANSCRIPTION INITIATION FACTOR TFIID SUBUNIT 5"/>
    <property type="match status" value="1"/>
</dbReference>
<dbReference type="Pfam" id="PF24951">
    <property type="entry name" value="LisH_PAC1"/>
    <property type="match status" value="1"/>
</dbReference>
<dbReference type="Pfam" id="PF00400">
    <property type="entry name" value="WD40"/>
    <property type="match status" value="6"/>
</dbReference>
<dbReference type="PIRSF" id="PIRSF037647">
    <property type="entry name" value="Dynein_regulator_Lis1"/>
    <property type="match status" value="1"/>
</dbReference>
<dbReference type="PRINTS" id="PR00320">
    <property type="entry name" value="GPROTEINBRPT"/>
</dbReference>
<dbReference type="SMART" id="SM00320">
    <property type="entry name" value="WD40"/>
    <property type="match status" value="7"/>
</dbReference>
<dbReference type="SUPFAM" id="SSF109925">
    <property type="entry name" value="Lissencephaly-1 protein (Lis-1, PAF-AH alpha) N-terminal domain"/>
    <property type="match status" value="1"/>
</dbReference>
<dbReference type="SUPFAM" id="SSF50978">
    <property type="entry name" value="WD40 repeat-like"/>
    <property type="match status" value="1"/>
</dbReference>
<dbReference type="PROSITE" id="PS50896">
    <property type="entry name" value="LISH"/>
    <property type="match status" value="1"/>
</dbReference>
<dbReference type="PROSITE" id="PS00678">
    <property type="entry name" value="WD_REPEATS_1"/>
    <property type="match status" value="3"/>
</dbReference>
<dbReference type="PROSITE" id="PS50082">
    <property type="entry name" value="WD_REPEATS_2"/>
    <property type="match status" value="6"/>
</dbReference>
<dbReference type="PROSITE" id="PS50294">
    <property type="entry name" value="WD_REPEATS_REGION"/>
    <property type="match status" value="1"/>
</dbReference>
<accession>A8NEG8</accession>
<name>LIS1_COPC7</name>
<reference key="1">
    <citation type="journal article" date="2010" name="Proc. Natl. Acad. Sci. U.S.A.">
        <title>Insights into evolution of multicellular fungi from the assembled chromosomes of the mushroom Coprinopsis cinerea (Coprinus cinereus).</title>
        <authorList>
            <person name="Stajich J.E."/>
            <person name="Wilke S.K."/>
            <person name="Ahren D."/>
            <person name="Au C.H."/>
            <person name="Birren B.W."/>
            <person name="Borodovsky M."/>
            <person name="Burns C."/>
            <person name="Canbaeck B."/>
            <person name="Casselton L.A."/>
            <person name="Cheng C.K."/>
            <person name="Deng J."/>
            <person name="Dietrich F.S."/>
            <person name="Fargo D.C."/>
            <person name="Farman M.L."/>
            <person name="Gathman A.C."/>
            <person name="Goldberg J."/>
            <person name="Guigo R."/>
            <person name="Hoegger P.J."/>
            <person name="Hooker J.B."/>
            <person name="Huggins A."/>
            <person name="James T.Y."/>
            <person name="Kamada T."/>
            <person name="Kilaru S."/>
            <person name="Kodira C."/>
            <person name="Kuees U."/>
            <person name="Kupfer D."/>
            <person name="Kwan H.S."/>
            <person name="Lomsadze A."/>
            <person name="Li W."/>
            <person name="Lilly W.W."/>
            <person name="Ma L.-J."/>
            <person name="Mackey A.J."/>
            <person name="Manning G."/>
            <person name="Martin F."/>
            <person name="Muraguchi H."/>
            <person name="Natvig D.O."/>
            <person name="Palmerini H."/>
            <person name="Ramesh M.A."/>
            <person name="Rehmeyer C.J."/>
            <person name="Roe B.A."/>
            <person name="Shenoy N."/>
            <person name="Stanke M."/>
            <person name="Ter-Hovhannisyan V."/>
            <person name="Tunlid A."/>
            <person name="Velagapudi R."/>
            <person name="Vision T.J."/>
            <person name="Zeng Q."/>
            <person name="Zolan M.E."/>
            <person name="Pukkila P.J."/>
        </authorList>
    </citation>
    <scope>NUCLEOTIDE SEQUENCE [LARGE SCALE GENOMIC DNA]</scope>
    <source>
        <strain>Okayama-7 / 130 / ATCC MYA-4618 / FGSC 9003</strain>
    </source>
</reference>
<keyword id="KW-0131">Cell cycle</keyword>
<keyword id="KW-0132">Cell division</keyword>
<keyword id="KW-0175">Coiled coil</keyword>
<keyword id="KW-0963">Cytoplasm</keyword>
<keyword id="KW-0206">Cytoskeleton</keyword>
<keyword id="KW-0493">Microtubule</keyword>
<keyword id="KW-0498">Mitosis</keyword>
<keyword id="KW-1185">Reference proteome</keyword>
<keyword id="KW-0677">Repeat</keyword>
<keyword id="KW-0813">Transport</keyword>
<keyword id="KW-0853">WD repeat</keyword>
<evidence type="ECO:0000255" key="1">
    <source>
        <dbReference type="HAMAP-Rule" id="MF_03141"/>
    </source>
</evidence>
<evidence type="ECO:0000305" key="2"/>
<gene>
    <name evidence="1" type="primary">PAC1</name>
    <name evidence="1" type="synonym">LIS1</name>
    <name type="ORF">CC1G_01084</name>
</gene>
<organism>
    <name type="scientific">Coprinopsis cinerea (strain Okayama-7 / 130 / ATCC MYA-4618 / FGSC 9003)</name>
    <name type="common">Inky cap fungus</name>
    <name type="synonym">Hormographiella aspergillata</name>
    <dbReference type="NCBI Taxonomy" id="240176"/>
    <lineage>
        <taxon>Eukaryota</taxon>
        <taxon>Fungi</taxon>
        <taxon>Dikarya</taxon>
        <taxon>Basidiomycota</taxon>
        <taxon>Agaricomycotina</taxon>
        <taxon>Agaricomycetes</taxon>
        <taxon>Agaricomycetidae</taxon>
        <taxon>Agaricales</taxon>
        <taxon>Agaricineae</taxon>
        <taxon>Psathyrellaceae</taxon>
        <taxon>Coprinopsis</taxon>
    </lineage>
</organism>